<evidence type="ECO:0000269" key="1">
    <source>
    </source>
</evidence>
<evidence type="ECO:0000269" key="2">
    <source>
    </source>
</evidence>
<evidence type="ECO:0000303" key="3">
    <source>
    </source>
</evidence>
<evidence type="ECO:0000303" key="4">
    <source>
    </source>
</evidence>
<evidence type="ECO:0000305" key="5"/>
<evidence type="ECO:0000312" key="6">
    <source>
        <dbReference type="PIR" id="S69125"/>
    </source>
</evidence>
<dbReference type="EC" id="3.2.2.22" evidence="1 2"/>
<dbReference type="PIR" id="S69125">
    <property type="entry name" value="S69125"/>
</dbReference>
<dbReference type="SMR" id="Q7M1L6"/>
<dbReference type="GO" id="GO:0030598">
    <property type="term" value="F:rRNA N-glycosylase activity"/>
    <property type="evidence" value="ECO:0007669"/>
    <property type="project" value="UniProtKB-EC"/>
</dbReference>
<dbReference type="GO" id="GO:0090729">
    <property type="term" value="F:toxin activity"/>
    <property type="evidence" value="ECO:0007669"/>
    <property type="project" value="UniProtKB-KW"/>
</dbReference>
<dbReference type="GO" id="GO:0006952">
    <property type="term" value="P:defense response"/>
    <property type="evidence" value="ECO:0007669"/>
    <property type="project" value="UniProtKB-KW"/>
</dbReference>
<dbReference type="GO" id="GO:0017148">
    <property type="term" value="P:negative regulation of translation"/>
    <property type="evidence" value="ECO:0007669"/>
    <property type="project" value="UniProtKB-KW"/>
</dbReference>
<dbReference type="Gene3D" id="3.40.420.10">
    <property type="entry name" value="Ricin (A subunit), domain 1"/>
    <property type="match status" value="1"/>
</dbReference>
<dbReference type="Gene3D" id="4.10.470.10">
    <property type="entry name" value="Ricin (A Subunit), domain 2"/>
    <property type="match status" value="1"/>
</dbReference>
<dbReference type="InterPro" id="IPR036041">
    <property type="entry name" value="Ribosome-inact_prot_sf"/>
</dbReference>
<dbReference type="InterPro" id="IPR017989">
    <property type="entry name" value="Ribosome_inactivat_1/2"/>
</dbReference>
<dbReference type="InterPro" id="IPR001574">
    <property type="entry name" value="Ribosome_inactivat_prot"/>
</dbReference>
<dbReference type="InterPro" id="IPR017988">
    <property type="entry name" value="Ribosome_inactivat_prot_CS"/>
</dbReference>
<dbReference type="InterPro" id="IPR016138">
    <property type="entry name" value="Ribosome_inactivat_prot_sub1"/>
</dbReference>
<dbReference type="InterPro" id="IPR016139">
    <property type="entry name" value="Ribosome_inactivat_prot_sub2"/>
</dbReference>
<dbReference type="PANTHER" id="PTHR33453">
    <property type="match status" value="1"/>
</dbReference>
<dbReference type="PANTHER" id="PTHR33453:SF34">
    <property type="entry name" value="RIBOSOME-INACTIVATING PROTEIN"/>
    <property type="match status" value="1"/>
</dbReference>
<dbReference type="Pfam" id="PF00161">
    <property type="entry name" value="RIP"/>
    <property type="match status" value="1"/>
</dbReference>
<dbReference type="PRINTS" id="PR00396">
    <property type="entry name" value="SHIGARICIN"/>
</dbReference>
<dbReference type="SUPFAM" id="SSF56371">
    <property type="entry name" value="Ribosome inactivating proteins (RIP)"/>
    <property type="match status" value="1"/>
</dbReference>
<sequence>VVTITLNLANPSKGQYSSFVDRIRNNVRDPKLKYGGTDIAVIGAPPTREKYLRINLQGPRGTVSLGLRRENLYVVAYLAMDNTNTNKAYYFRNQITSAELRTVFPEATAANQIVIQYGEDYQSIERNAQITQGSQSRKELGLGIDLLVTSIDGVNRKARVVRNEARFLLIAIQMTAEAARFRYIQNLVTFNFPKKFDSDNKVIQFEVSWGKISRAIYGDCKNGVFNKDYDFGFGKVRQAKQLQMGLLMYLGRPG</sequence>
<organism>
    <name type="scientific">Gypsophila vaccaria</name>
    <name type="common">Cow soapwort</name>
    <name type="synonym">Saponaria vaccaria</name>
    <dbReference type="NCBI Taxonomy" id="39387"/>
    <lineage>
        <taxon>Eukaryota</taxon>
        <taxon>Viridiplantae</taxon>
        <taxon>Streptophyta</taxon>
        <taxon>Embryophyta</taxon>
        <taxon>Tracheophyta</taxon>
        <taxon>Spermatophyta</taxon>
        <taxon>Magnoliopsida</taxon>
        <taxon>eudicotyledons</taxon>
        <taxon>Gunneridae</taxon>
        <taxon>Pentapetalae</taxon>
        <taxon>Caryophyllales</taxon>
        <taxon>Caryophyllaceae</taxon>
        <taxon>Caryophylleae</taxon>
        <taxon>Gypsophila</taxon>
    </lineage>
</organism>
<proteinExistence type="evidence at protein level"/>
<accession>Q7M1L6</accession>
<name>RIP1_GYPVA</name>
<comment type="function">
    <text evidence="1 2 3">Exhibits N-glycosylase activity (PubMed:35878187, PubMed:7737197). Catalyzes the release of one adenine from a ribosome (PubMed:35878187). Acts as a ribosome-inactivating protein and inhibits protein synthesis in a rabbit-reticulocyte lysate system and in various cell lines (in vitro) (PubMed:7737197). Induces cell death in Huh-7 liver cells (PubMed:35878187). May contribute to the protection against plant pests and predators or play a role in regulating the death of plant cells (PubMed:35878187).</text>
</comment>
<comment type="catalytic activity">
    <reaction evidence="1 2">
        <text>Endohydrolysis of the N-glycosidic bond at one specific adenosine on the 28S rRNA.</text>
        <dbReference type="EC" id="3.2.2.22"/>
    </reaction>
</comment>
<comment type="tissue specificity">
    <text evidence="1 2">Expressed in seeds; most abundant in the perisperm.</text>
</comment>
<comment type="mass spectrometry"/>
<comment type="toxic dose">
    <text evidence="2">LD(50) of 2.6 mg/kg in mouse.</text>
</comment>
<comment type="miscellaneous">
    <text evidence="1">Thermostable at 68.9 degrees Celsius.</text>
</comment>
<comment type="similarity">
    <text evidence="5">Belongs to the ribosome-inactivating protein family. Type 1 RIP subfamily.</text>
</comment>
<feature type="chain" id="PRO_0000456721" description="rRNA N-glycosylase sapovaccarin-S1">
    <location>
        <begin position="1"/>
        <end position="254"/>
    </location>
</feature>
<protein>
    <recommendedName>
        <fullName evidence="5">rRNA N-glycosylase sapovaccarin-S1</fullName>
        <ecNumber evidence="1 2">3.2.2.22</ecNumber>
    </recommendedName>
    <alternativeName>
        <fullName evidence="4">Ribosome-inactivating protein sapovaccarin-S1</fullName>
        <shortName evidence="4">RIP sapovaccarin-S1</shortName>
    </alternativeName>
    <alternativeName>
        <fullName evidence="4">rRNA N-glycosidase</fullName>
    </alternativeName>
</protein>
<reference evidence="6" key="1">
    <citation type="journal article" date="1995" name="Eur. J. Biochem.">
        <title>Ribosome-inactivating proteins (RNA N-glycosidases) from the seeds of Saponaria ocymoides and Vaccaria pyramidata.</title>
        <authorList>
            <person name="Bolognesi A."/>
            <person name="Olivieri F."/>
            <person name="Battelli M.G."/>
            <person name="Barbieri L."/>
            <person name="Falasca A.I."/>
            <person name="Parente A."/>
            <person name="Del Vecchio Blanco F."/>
            <person name="Stirpe F."/>
        </authorList>
    </citation>
    <scope>PROTEIN SEQUENCE OF 1-30</scope>
    <scope>FUNCTION</scope>
    <scope>CATALYTIC ACTIVITY</scope>
    <scope>TISSUE SPECIFICITY</scope>
    <scope>TOXIC DOSE</scope>
</reference>
<reference key="2">
    <citation type="journal article" date="2022" name="Toxins">
        <title>Sapovaccarin-S1 and -S2, Two Type I RIP Isoforms from the Seeds of Saponaria vaccaria L.</title>
        <authorList>
            <person name="Schlaak L."/>
            <person name="Weise C."/>
            <person name="Kuropka B."/>
            <person name="Weng A."/>
        </authorList>
    </citation>
    <scope>NUCLEOTIDE SEQUENCE [GENOMIC DNA] OF 6-247</scope>
    <scope>PROTEIN SEQUENCE OF 1-5; 14-28; 34-48; 54-60; 88-101; 127-137 AND 228-254</scope>
    <scope>FUNCTION</scope>
    <scope>CATALYTIC ACTIVITY</scope>
    <scope>TISSUE SPECIFICITY</scope>
    <scope>MASS SPECTROMETRY</scope>
</reference>
<keyword id="KW-0903">Direct protein sequencing</keyword>
<keyword id="KW-0378">Hydrolase</keyword>
<keyword id="KW-0611">Plant defense</keyword>
<keyword id="KW-0652">Protein synthesis inhibitor</keyword>
<keyword id="KW-0800">Toxin</keyword>